<keyword id="KW-0025">Alternative splicing</keyword>
<keyword id="KW-1015">Disulfide bond</keyword>
<keyword id="KW-0325">Glycoprotein</keyword>
<keyword id="KW-0393">Immunoglobulin domain</keyword>
<keyword id="KW-0472">Membrane</keyword>
<keyword id="KW-0675">Receptor</keyword>
<keyword id="KW-1185">Reference proteome</keyword>
<keyword id="KW-0732">Signal</keyword>
<keyword id="KW-0812">Transmembrane</keyword>
<keyword id="KW-1133">Transmembrane helix</keyword>
<name>MO2R2_HUMAN</name>
<organism>
    <name type="scientific">Homo sapiens</name>
    <name type="common">Human</name>
    <dbReference type="NCBI Taxonomy" id="9606"/>
    <lineage>
        <taxon>Eukaryota</taxon>
        <taxon>Metazoa</taxon>
        <taxon>Chordata</taxon>
        <taxon>Craniata</taxon>
        <taxon>Vertebrata</taxon>
        <taxon>Euteleostomi</taxon>
        <taxon>Mammalia</taxon>
        <taxon>Eutheria</taxon>
        <taxon>Euarchontoglires</taxon>
        <taxon>Primates</taxon>
        <taxon>Haplorrhini</taxon>
        <taxon>Catarrhini</taxon>
        <taxon>Hominidae</taxon>
        <taxon>Homo</taxon>
    </lineage>
</organism>
<accession>Q6Q8B3</accession>
<accession>Q6WHB7</accession>
<evidence type="ECO:0000250" key="1"/>
<evidence type="ECO:0000255" key="2"/>
<evidence type="ECO:0000255" key="3">
    <source>
        <dbReference type="PROSITE-ProRule" id="PRU00114"/>
    </source>
</evidence>
<evidence type="ECO:0000269" key="4">
    <source>
    </source>
</evidence>
<evidence type="ECO:0000303" key="5">
    <source>
    </source>
</evidence>
<evidence type="ECO:0000305" key="6"/>
<reference key="1">
    <citation type="journal article" date="2003" name="J. Immunol.">
        <title>Characterization of the CD200 receptor family in mice and humans and their interactions with CD200.</title>
        <authorList>
            <person name="Wright G.J."/>
            <person name="Cherwinski H."/>
            <person name="Foster-Cuevas M."/>
            <person name="Brooke G."/>
            <person name="Puklavec M.J."/>
            <person name="Bigler M."/>
            <person name="Song Y."/>
            <person name="Jenmalm M."/>
            <person name="Gorman D."/>
            <person name="McClanahan T."/>
            <person name="Liu M.-R."/>
            <person name="Brown M.H."/>
            <person name="Sedgwick J.D."/>
            <person name="Phillips J.H."/>
            <person name="Barclay A.N."/>
        </authorList>
    </citation>
    <scope>NUCLEOTIDE SEQUENCE [MRNA] (ISOFORM 1)</scope>
    <source>
        <tissue>Peripheral blood</tissue>
    </source>
</reference>
<reference key="2">
    <citation type="journal article" date="2004" name="Am. J. Reprod. Immunol.">
        <title>Structural and functional heterogeneity in the CD200R family of immunoregulatory molecules and their expression at the feto-maternal interface.</title>
        <authorList>
            <person name="Gorczynski R.M."/>
            <person name="Chen Z."/>
            <person name="Clark D.A."/>
            <person name="Kai Y."/>
            <person name="Lee L."/>
            <person name="Nachman J."/>
            <person name="Wong S."/>
            <person name="Marsden P."/>
        </authorList>
    </citation>
    <scope>NUCLEOTIDE SEQUENCE [MRNA] (ISOFORMS 1 AND 2)</scope>
    <scope>VARIANT LEU-113</scope>
</reference>
<reference key="3">
    <citation type="journal article" date="2006" name="Nature">
        <title>The DNA sequence, annotation and analysis of human chromosome 3.</title>
        <authorList>
            <person name="Muzny D.M."/>
            <person name="Scherer S.E."/>
            <person name="Kaul R."/>
            <person name="Wang J."/>
            <person name="Yu J."/>
            <person name="Sudbrak R."/>
            <person name="Buhay C.J."/>
            <person name="Chen R."/>
            <person name="Cree A."/>
            <person name="Ding Y."/>
            <person name="Dugan-Rocha S."/>
            <person name="Gill R."/>
            <person name="Gunaratne P."/>
            <person name="Harris R.A."/>
            <person name="Hawes A.C."/>
            <person name="Hernandez J."/>
            <person name="Hodgson A.V."/>
            <person name="Hume J."/>
            <person name="Jackson A."/>
            <person name="Khan Z.M."/>
            <person name="Kovar-Smith C."/>
            <person name="Lewis L.R."/>
            <person name="Lozado R.J."/>
            <person name="Metzker M.L."/>
            <person name="Milosavljevic A."/>
            <person name="Miner G.R."/>
            <person name="Morgan M.B."/>
            <person name="Nazareth L.V."/>
            <person name="Scott G."/>
            <person name="Sodergren E."/>
            <person name="Song X.-Z."/>
            <person name="Steffen D."/>
            <person name="Wei S."/>
            <person name="Wheeler D.A."/>
            <person name="Wright M.W."/>
            <person name="Worley K.C."/>
            <person name="Yuan Y."/>
            <person name="Zhang Z."/>
            <person name="Adams C.Q."/>
            <person name="Ansari-Lari M.A."/>
            <person name="Ayele M."/>
            <person name="Brown M.J."/>
            <person name="Chen G."/>
            <person name="Chen Z."/>
            <person name="Clendenning J."/>
            <person name="Clerc-Blankenburg K.P."/>
            <person name="Chen R."/>
            <person name="Chen Z."/>
            <person name="Davis C."/>
            <person name="Delgado O."/>
            <person name="Dinh H.H."/>
            <person name="Dong W."/>
            <person name="Draper H."/>
            <person name="Ernst S."/>
            <person name="Fu G."/>
            <person name="Gonzalez-Garay M.L."/>
            <person name="Garcia D.K."/>
            <person name="Gillett W."/>
            <person name="Gu J."/>
            <person name="Hao B."/>
            <person name="Haugen E."/>
            <person name="Havlak P."/>
            <person name="He X."/>
            <person name="Hennig S."/>
            <person name="Hu S."/>
            <person name="Huang W."/>
            <person name="Jackson L.R."/>
            <person name="Jacob L.S."/>
            <person name="Kelly S.H."/>
            <person name="Kube M."/>
            <person name="Levy R."/>
            <person name="Li Z."/>
            <person name="Liu B."/>
            <person name="Liu J."/>
            <person name="Liu W."/>
            <person name="Lu J."/>
            <person name="Maheshwari M."/>
            <person name="Nguyen B.-V."/>
            <person name="Okwuonu G.O."/>
            <person name="Palmeiri A."/>
            <person name="Pasternak S."/>
            <person name="Perez L.M."/>
            <person name="Phelps K.A."/>
            <person name="Plopper F.J."/>
            <person name="Qiang B."/>
            <person name="Raymond C."/>
            <person name="Rodriguez R."/>
            <person name="Saenphimmachak C."/>
            <person name="Santibanez J."/>
            <person name="Shen H."/>
            <person name="Shen Y."/>
            <person name="Subramanian S."/>
            <person name="Tabor P.E."/>
            <person name="Verduzco D."/>
            <person name="Waldron L."/>
            <person name="Wang J."/>
            <person name="Wang J."/>
            <person name="Wang Q."/>
            <person name="Williams G.A."/>
            <person name="Wong G.K.-S."/>
            <person name="Yao Z."/>
            <person name="Zhang J."/>
            <person name="Zhang X."/>
            <person name="Zhao G."/>
            <person name="Zhou J."/>
            <person name="Zhou Y."/>
            <person name="Nelson D."/>
            <person name="Lehrach H."/>
            <person name="Reinhardt R."/>
            <person name="Naylor S.L."/>
            <person name="Yang H."/>
            <person name="Olson M."/>
            <person name="Weinstock G."/>
            <person name="Gibbs R.A."/>
        </authorList>
    </citation>
    <scope>NUCLEOTIDE SEQUENCE [LARGE SCALE GENOMIC DNA]</scope>
</reference>
<feature type="signal peptide" evidence="2">
    <location>
        <begin position="1"/>
        <end position="23"/>
    </location>
</feature>
<feature type="chain" id="PRO_0000346451" description="Cell surface glycoprotein CD200 receptor 2">
    <location>
        <begin position="24"/>
        <end position="271"/>
    </location>
</feature>
<feature type="topological domain" description="Extracellular" evidence="2">
    <location>
        <begin position="24"/>
        <end position="239"/>
    </location>
</feature>
<feature type="transmembrane region" description="Helical" evidence="2">
    <location>
        <begin position="240"/>
        <end position="260"/>
    </location>
</feature>
<feature type="topological domain" description="Cytoplasmic" evidence="2">
    <location>
        <begin position="261"/>
        <end position="271"/>
    </location>
</feature>
<feature type="domain" description="Ig-like V-type">
    <location>
        <begin position="46"/>
        <end position="132"/>
    </location>
</feature>
<feature type="domain" description="Ig-like C2-type">
    <location>
        <begin position="133"/>
        <end position="221"/>
    </location>
</feature>
<feature type="glycosylation site" description="N-linked (GlcNAc...) asparagine" evidence="2">
    <location>
        <position position="30"/>
    </location>
</feature>
<feature type="glycosylation site" description="N-linked (GlcNAc...) asparagine" evidence="2">
    <location>
        <position position="39"/>
    </location>
</feature>
<feature type="glycosylation site" description="N-linked (GlcNAc...) asparagine" evidence="2">
    <location>
        <position position="86"/>
    </location>
</feature>
<feature type="glycosylation site" description="N-linked (GlcNAc...) asparagine" evidence="2">
    <location>
        <position position="92"/>
    </location>
</feature>
<feature type="glycosylation site" description="N-linked (GlcNAc...) asparagine" evidence="2">
    <location>
        <position position="189"/>
    </location>
</feature>
<feature type="glycosylation site" description="N-linked (GlcNAc...) asparagine" evidence="2">
    <location>
        <position position="217"/>
    </location>
</feature>
<feature type="disulfide bond" evidence="3">
    <location>
        <begin position="160"/>
        <end position="209"/>
    </location>
</feature>
<feature type="splice variant" id="VSP_035002" description="In isoform 2." evidence="5">
    <location>
        <begin position="1"/>
        <end position="21"/>
    </location>
</feature>
<feature type="sequence variant" id="VAR_045897" description="In dbSNP:rs4682119." evidence="4">
    <original>R</original>
    <variation>L</variation>
    <location>
        <position position="113"/>
    </location>
</feature>
<gene>
    <name type="primary">CD200R1L</name>
    <name type="synonym">CD200R2</name>
</gene>
<sequence>MSAPRLLISIIIMVSASSSSCMGGKQMTQNYSTIFAEGNISQPVLMDINAVLCCPPIALRNLIIITWEIILRGQPSCTKAYKKETNETKETNCTVERITWVSRPDQNSDLQIRPVDTTHDGYYRGIVVTPDGNFHRGYHLQVLVTPEVNLFQSRNITAVCKAVTGKPAAQISWIPEGSILATKQEYWGNGTVTVKSTCPWEGHKSTVTCHVSHLTGNKSLSVKLNSGLRTSGSPALSLLIILYVKLSLFVVILVTTGFVFFQRINHVRKVL</sequence>
<proteinExistence type="evidence at protein level"/>
<dbReference type="EMBL" id="AY284976">
    <property type="protein sequence ID" value="AAQ19773.1"/>
    <property type="molecule type" value="mRNA"/>
</dbReference>
<dbReference type="EMBL" id="AY552790">
    <property type="protein sequence ID" value="AAT00538.1"/>
    <property type="molecule type" value="mRNA"/>
</dbReference>
<dbReference type="EMBL" id="AC074044">
    <property type="status" value="NOT_ANNOTATED_CDS"/>
    <property type="molecule type" value="Genomic_DNA"/>
</dbReference>
<dbReference type="EMBL" id="AC092892">
    <property type="status" value="NOT_ANNOTATED_CDS"/>
    <property type="molecule type" value="Genomic_DNA"/>
</dbReference>
<dbReference type="CCDS" id="CCDS43131.1">
    <molecule id="Q6Q8B3-1"/>
</dbReference>
<dbReference type="CCDS" id="CCDS56267.1">
    <molecule id="Q6Q8B3-2"/>
</dbReference>
<dbReference type="RefSeq" id="NP_001008784.2">
    <molecule id="Q6Q8B3-1"/>
    <property type="nucleotide sequence ID" value="NM_001008784.4"/>
</dbReference>
<dbReference type="RefSeq" id="NP_001186144.1">
    <molecule id="Q6Q8B3-2"/>
    <property type="nucleotide sequence ID" value="NM_001199215.3"/>
</dbReference>
<dbReference type="RefSeq" id="NP_001357481.1">
    <molecule id="Q6Q8B3-2"/>
    <property type="nucleotide sequence ID" value="NM_001370552.3"/>
</dbReference>
<dbReference type="RefSeq" id="XP_011511065.1">
    <property type="nucleotide sequence ID" value="XM_011512763.2"/>
</dbReference>
<dbReference type="RefSeq" id="XP_016861789.1">
    <property type="nucleotide sequence ID" value="XM_017006300.1"/>
</dbReference>
<dbReference type="SMR" id="Q6Q8B3"/>
<dbReference type="BioGRID" id="131325">
    <property type="interactions" value="2"/>
</dbReference>
<dbReference type="FunCoup" id="Q6Q8B3">
    <property type="interactions" value="56"/>
</dbReference>
<dbReference type="IntAct" id="Q6Q8B3">
    <property type="interactions" value="2"/>
</dbReference>
<dbReference type="STRING" id="9606.ENSP00000381272"/>
<dbReference type="GlyCosmos" id="Q6Q8B3">
    <property type="glycosylation" value="6 sites, No reported glycans"/>
</dbReference>
<dbReference type="GlyGen" id="Q6Q8B3">
    <property type="glycosylation" value="6 sites"/>
</dbReference>
<dbReference type="iPTMnet" id="Q6Q8B3"/>
<dbReference type="PhosphoSitePlus" id="Q6Q8B3"/>
<dbReference type="BioMuta" id="CD200R1L"/>
<dbReference type="DMDM" id="205829216"/>
<dbReference type="MassIVE" id="Q6Q8B3"/>
<dbReference type="PaxDb" id="9606-ENSP00000381272"/>
<dbReference type="PeptideAtlas" id="Q6Q8B3"/>
<dbReference type="Antibodypedia" id="58040">
    <property type="antibodies" value="134 antibodies from 16 providers"/>
</dbReference>
<dbReference type="DNASU" id="344807"/>
<dbReference type="Ensembl" id="ENST00000398214.5">
    <molecule id="Q6Q8B3-1"/>
    <property type="protein sequence ID" value="ENSP00000381272.1"/>
    <property type="gene ID" value="ENSG00000206531.12"/>
</dbReference>
<dbReference type="Ensembl" id="ENST00000488794.6">
    <molecule id="Q6Q8B3-2"/>
    <property type="protein sequence ID" value="ENSP00000418413.1"/>
    <property type="gene ID" value="ENSG00000206531.12"/>
</dbReference>
<dbReference type="GeneID" id="344807"/>
<dbReference type="KEGG" id="hsa:344807"/>
<dbReference type="MANE-Select" id="ENST00000488794.6">
    <molecule id="Q6Q8B3-2"/>
    <property type="protein sequence ID" value="ENSP00000418413.1"/>
    <property type="RefSeq nucleotide sequence ID" value="NM_001199215.3"/>
    <property type="RefSeq protein sequence ID" value="NP_001186144.1"/>
</dbReference>
<dbReference type="UCSC" id="uc003dzi.1">
    <molecule id="Q6Q8B3-1"/>
    <property type="organism name" value="human"/>
</dbReference>
<dbReference type="AGR" id="HGNC:24665"/>
<dbReference type="CTD" id="344807"/>
<dbReference type="DisGeNET" id="344807"/>
<dbReference type="GeneCards" id="CD200R1L"/>
<dbReference type="HGNC" id="HGNC:24665">
    <property type="gene designation" value="CD200R1L"/>
</dbReference>
<dbReference type="HPA" id="ENSG00000206531">
    <property type="expression patterns" value="Tissue enriched (testis)"/>
</dbReference>
<dbReference type="neXtProt" id="NX_Q6Q8B3"/>
<dbReference type="OpenTargets" id="ENSG00000206531"/>
<dbReference type="PharmGKB" id="PA164717784"/>
<dbReference type="VEuPathDB" id="HostDB:ENSG00000206531"/>
<dbReference type="eggNOG" id="ENOG502S9IV">
    <property type="taxonomic scope" value="Eukaryota"/>
</dbReference>
<dbReference type="GeneTree" id="ENSGT00390000014496"/>
<dbReference type="InParanoid" id="Q6Q8B3"/>
<dbReference type="OMA" id="NCKISFV"/>
<dbReference type="OrthoDB" id="8915654at2759"/>
<dbReference type="PAN-GO" id="Q6Q8B3">
    <property type="GO annotations" value="2 GO annotations based on evolutionary models"/>
</dbReference>
<dbReference type="PhylomeDB" id="Q6Q8B3"/>
<dbReference type="TreeFam" id="TF335960"/>
<dbReference type="PathwayCommons" id="Q6Q8B3"/>
<dbReference type="SignaLink" id="Q6Q8B3"/>
<dbReference type="BioGRID-ORCS" id="344807">
    <property type="hits" value="13 hits in 1137 CRISPR screens"/>
</dbReference>
<dbReference type="ChiTaRS" id="CD200R1L">
    <property type="organism name" value="human"/>
</dbReference>
<dbReference type="GenomeRNAi" id="344807"/>
<dbReference type="Pharos" id="Q6Q8B3">
    <property type="development level" value="Tdark"/>
</dbReference>
<dbReference type="PRO" id="PR:Q6Q8B3"/>
<dbReference type="Proteomes" id="UP000005640">
    <property type="component" value="Chromosome 3"/>
</dbReference>
<dbReference type="RNAct" id="Q6Q8B3">
    <property type="molecule type" value="protein"/>
</dbReference>
<dbReference type="Bgee" id="ENSG00000206531">
    <property type="expression patterns" value="Expressed in primordial germ cell in gonad and 19 other cell types or tissues"/>
</dbReference>
<dbReference type="ExpressionAtlas" id="Q6Q8B3">
    <property type="expression patterns" value="baseline and differential"/>
</dbReference>
<dbReference type="GO" id="GO:0009897">
    <property type="term" value="C:external side of plasma membrane"/>
    <property type="evidence" value="ECO:0000318"/>
    <property type="project" value="GO_Central"/>
</dbReference>
<dbReference type="GO" id="GO:0038023">
    <property type="term" value="F:signaling receptor activity"/>
    <property type="evidence" value="ECO:0000318"/>
    <property type="project" value="GO_Central"/>
</dbReference>
<dbReference type="GO" id="GO:0150077">
    <property type="term" value="P:regulation of neuroinflammatory response"/>
    <property type="evidence" value="ECO:0007669"/>
    <property type="project" value="InterPro"/>
</dbReference>
<dbReference type="FunFam" id="2.60.40.10:FF:000584">
    <property type="entry name" value="Cell surface glycoprotein CD200 receptor 1"/>
    <property type="match status" value="1"/>
</dbReference>
<dbReference type="FunFam" id="2.60.40.10:FF:000769">
    <property type="entry name" value="Cell surface glycoprotein CD200 receptor 1"/>
    <property type="match status" value="1"/>
</dbReference>
<dbReference type="Gene3D" id="2.60.40.10">
    <property type="entry name" value="Immunoglobulins"/>
    <property type="match status" value="2"/>
</dbReference>
<dbReference type="InterPro" id="IPR040012">
    <property type="entry name" value="CD200R"/>
</dbReference>
<dbReference type="InterPro" id="IPR013162">
    <property type="entry name" value="CD80_C2-set"/>
</dbReference>
<dbReference type="InterPro" id="IPR007110">
    <property type="entry name" value="Ig-like_dom"/>
</dbReference>
<dbReference type="InterPro" id="IPR036179">
    <property type="entry name" value="Ig-like_dom_sf"/>
</dbReference>
<dbReference type="InterPro" id="IPR013783">
    <property type="entry name" value="Ig-like_fold"/>
</dbReference>
<dbReference type="PANTHER" id="PTHR21462:SF2">
    <property type="entry name" value="CELL SURFACE GLYCOPROTEIN CD200 RECEPTOR 2"/>
    <property type="match status" value="1"/>
</dbReference>
<dbReference type="PANTHER" id="PTHR21462">
    <property type="entry name" value="CELL SURFACE GLYCOPROTEIN OX2 RECEPTOR PRECURSOR"/>
    <property type="match status" value="1"/>
</dbReference>
<dbReference type="Pfam" id="PF08205">
    <property type="entry name" value="C2-set_2"/>
    <property type="match status" value="1"/>
</dbReference>
<dbReference type="SUPFAM" id="SSF48726">
    <property type="entry name" value="Immunoglobulin"/>
    <property type="match status" value="1"/>
</dbReference>
<dbReference type="PROSITE" id="PS50835">
    <property type="entry name" value="IG_LIKE"/>
    <property type="match status" value="1"/>
</dbReference>
<protein>
    <recommendedName>
        <fullName>Cell surface glycoprotein CD200 receptor 2</fullName>
    </recommendedName>
    <alternativeName>
        <fullName>CD200 cell surface glycoprotein receptor-like 2</fullName>
        <shortName>CD200 receptor-like 2</shortName>
        <shortName>HuCD200R2</shortName>
    </alternativeName>
    <alternativeName>
        <fullName>CD200 cell surface glycoprotein receptor-like a</fullName>
        <shortName>CD200RLa</shortName>
    </alternativeName>
    <alternativeName>
        <fullName>Cell surface glycoprotein CD200 receptor 1-like</fullName>
    </alternativeName>
    <alternativeName>
        <fullName>Cell surface glycoprotein OX2 receptor 2</fullName>
    </alternativeName>
</protein>
<comment type="function">
    <text evidence="1">May be a receptor for the CD200/OX2 cell surface glycoprotein.</text>
</comment>
<comment type="interaction">
    <interactant intactId="EBI-18552964">
        <id>Q6Q8B3</id>
    </interactant>
    <interactant intactId="EBI-1385894">
        <id>Q99801</id>
        <label>NKX3-1</label>
    </interactant>
    <organismsDiffer>false</organismsDiffer>
    <experiments>3</experiments>
</comment>
<comment type="subcellular location">
    <subcellularLocation>
        <location evidence="6">Membrane</location>
        <topology evidence="6">Single-pass type I membrane protein</topology>
    </subcellularLocation>
</comment>
<comment type="alternative products">
    <event type="alternative splicing"/>
    <isoform>
        <id>Q6Q8B3-1</id>
        <name>1</name>
        <sequence type="displayed"/>
    </isoform>
    <isoform>
        <id>Q6Q8B3-2</id>
        <name>2</name>
        <sequence type="described" ref="VSP_035002"/>
    </isoform>
</comment>
<comment type="similarity">
    <text evidence="6">Belongs to the CD200R family.</text>
</comment>